<feature type="chain" id="PRO_0000198412" description="Met repressor">
    <location>
        <begin position="1"/>
        <end position="105"/>
    </location>
</feature>
<sequence length="105" mass="12149">MAEWNGEYVSPYAEHGKKSKQVKKITVSIPLKVLKILTDERTRRQVNNLRHATNSELLCEAFLHAFTGQPLPNDEDLRKERSDEIPEAAKILMRELGVDPDTWEY</sequence>
<dbReference type="EMBL" id="AL590842">
    <property type="protein sequence ID" value="CAL18801.1"/>
    <property type="molecule type" value="Genomic_DNA"/>
</dbReference>
<dbReference type="EMBL" id="AE009952">
    <property type="protein sequence ID" value="AAM83893.1"/>
    <property type="molecule type" value="Genomic_DNA"/>
</dbReference>
<dbReference type="EMBL" id="AE017042">
    <property type="protein sequence ID" value="AAS60395.1"/>
    <property type="molecule type" value="Genomic_DNA"/>
</dbReference>
<dbReference type="PIR" id="AH0014">
    <property type="entry name" value="AH0014"/>
</dbReference>
<dbReference type="RefSeq" id="WP_002208935.1">
    <property type="nucleotide sequence ID" value="NZ_WUCM01000087.1"/>
</dbReference>
<dbReference type="RefSeq" id="YP_002345203.1">
    <property type="nucleotide sequence ID" value="NC_003143.1"/>
</dbReference>
<dbReference type="SMR" id="Q8ZJI8"/>
<dbReference type="STRING" id="214092.YPO0114"/>
<dbReference type="PaxDb" id="214092-YPO0114"/>
<dbReference type="DNASU" id="1145248"/>
<dbReference type="EnsemblBacteria" id="AAS60395">
    <property type="protein sequence ID" value="AAS60395"/>
    <property type="gene ID" value="YP_0116"/>
</dbReference>
<dbReference type="GeneID" id="57974482"/>
<dbReference type="KEGG" id="ype:YPO0114"/>
<dbReference type="KEGG" id="ypk:y0301"/>
<dbReference type="KEGG" id="ypm:YP_0116"/>
<dbReference type="PATRIC" id="fig|214092.21.peg.338"/>
<dbReference type="eggNOG" id="COG3060">
    <property type="taxonomic scope" value="Bacteria"/>
</dbReference>
<dbReference type="HOGENOM" id="CLU_142318_0_0_6"/>
<dbReference type="OMA" id="KWNGEYI"/>
<dbReference type="OrthoDB" id="5680896at2"/>
<dbReference type="Proteomes" id="UP000000815">
    <property type="component" value="Chromosome"/>
</dbReference>
<dbReference type="Proteomes" id="UP000001019">
    <property type="component" value="Chromosome"/>
</dbReference>
<dbReference type="Proteomes" id="UP000002490">
    <property type="component" value="Chromosome"/>
</dbReference>
<dbReference type="GO" id="GO:0005737">
    <property type="term" value="C:cytoplasm"/>
    <property type="evidence" value="ECO:0007669"/>
    <property type="project" value="UniProtKB-SubCell"/>
</dbReference>
<dbReference type="GO" id="GO:0003677">
    <property type="term" value="F:DNA binding"/>
    <property type="evidence" value="ECO:0007669"/>
    <property type="project" value="UniProtKB-KW"/>
</dbReference>
<dbReference type="GO" id="GO:0003700">
    <property type="term" value="F:DNA-binding transcription factor activity"/>
    <property type="evidence" value="ECO:0007669"/>
    <property type="project" value="InterPro"/>
</dbReference>
<dbReference type="GO" id="GO:0009086">
    <property type="term" value="P:methionine biosynthetic process"/>
    <property type="evidence" value="ECO:0007669"/>
    <property type="project" value="UniProtKB-UniRule"/>
</dbReference>
<dbReference type="GO" id="GO:0045892">
    <property type="term" value="P:negative regulation of DNA-templated transcription"/>
    <property type="evidence" value="ECO:0007669"/>
    <property type="project" value="UniProtKB-UniRule"/>
</dbReference>
<dbReference type="CDD" id="cd00490">
    <property type="entry name" value="Met_repressor_MetJ"/>
    <property type="match status" value="1"/>
</dbReference>
<dbReference type="FunFam" id="1.10.140.10:FF:000001">
    <property type="entry name" value="Met repressor"/>
    <property type="match status" value="1"/>
</dbReference>
<dbReference type="Gene3D" id="1.10.140.10">
    <property type="entry name" value="MET Apo-Repressor, subunit A"/>
    <property type="match status" value="1"/>
</dbReference>
<dbReference type="HAMAP" id="MF_00744">
    <property type="entry name" value="MetJ"/>
    <property type="match status" value="1"/>
</dbReference>
<dbReference type="InterPro" id="IPR002084">
    <property type="entry name" value="Met_repressor_MetJ"/>
</dbReference>
<dbReference type="InterPro" id="IPR023453">
    <property type="entry name" value="Met_repressor_MetJ_dom_sf"/>
</dbReference>
<dbReference type="InterPro" id="IPR010985">
    <property type="entry name" value="Ribbon_hlx_hlx"/>
</dbReference>
<dbReference type="NCBIfam" id="NF003622">
    <property type="entry name" value="PRK05264.1"/>
    <property type="match status" value="1"/>
</dbReference>
<dbReference type="Pfam" id="PF01340">
    <property type="entry name" value="MetJ"/>
    <property type="match status" value="1"/>
</dbReference>
<dbReference type="SUPFAM" id="SSF47598">
    <property type="entry name" value="Ribbon-helix-helix"/>
    <property type="match status" value="1"/>
</dbReference>
<reference key="1">
    <citation type="journal article" date="2001" name="Nature">
        <title>Genome sequence of Yersinia pestis, the causative agent of plague.</title>
        <authorList>
            <person name="Parkhill J."/>
            <person name="Wren B.W."/>
            <person name="Thomson N.R."/>
            <person name="Titball R.W."/>
            <person name="Holden M.T.G."/>
            <person name="Prentice M.B."/>
            <person name="Sebaihia M."/>
            <person name="James K.D."/>
            <person name="Churcher C.M."/>
            <person name="Mungall K.L."/>
            <person name="Baker S."/>
            <person name="Basham D."/>
            <person name="Bentley S.D."/>
            <person name="Brooks K."/>
            <person name="Cerdeno-Tarraga A.-M."/>
            <person name="Chillingworth T."/>
            <person name="Cronin A."/>
            <person name="Davies R.M."/>
            <person name="Davis P."/>
            <person name="Dougan G."/>
            <person name="Feltwell T."/>
            <person name="Hamlin N."/>
            <person name="Holroyd S."/>
            <person name="Jagels K."/>
            <person name="Karlyshev A.V."/>
            <person name="Leather S."/>
            <person name="Moule S."/>
            <person name="Oyston P.C.F."/>
            <person name="Quail M.A."/>
            <person name="Rutherford K.M."/>
            <person name="Simmonds M."/>
            <person name="Skelton J."/>
            <person name="Stevens K."/>
            <person name="Whitehead S."/>
            <person name="Barrell B.G."/>
        </authorList>
    </citation>
    <scope>NUCLEOTIDE SEQUENCE [LARGE SCALE GENOMIC DNA]</scope>
    <source>
        <strain>CO-92 / Biovar Orientalis</strain>
    </source>
</reference>
<reference key="2">
    <citation type="journal article" date="2002" name="J. Bacteriol.">
        <title>Genome sequence of Yersinia pestis KIM.</title>
        <authorList>
            <person name="Deng W."/>
            <person name="Burland V."/>
            <person name="Plunkett G. III"/>
            <person name="Boutin A."/>
            <person name="Mayhew G.F."/>
            <person name="Liss P."/>
            <person name="Perna N.T."/>
            <person name="Rose D.J."/>
            <person name="Mau B."/>
            <person name="Zhou S."/>
            <person name="Schwartz D.C."/>
            <person name="Fetherston J.D."/>
            <person name="Lindler L.E."/>
            <person name="Brubaker R.R."/>
            <person name="Plano G.V."/>
            <person name="Straley S.C."/>
            <person name="McDonough K.A."/>
            <person name="Nilles M.L."/>
            <person name="Matson J.S."/>
            <person name="Blattner F.R."/>
            <person name="Perry R.D."/>
        </authorList>
    </citation>
    <scope>NUCLEOTIDE SEQUENCE [LARGE SCALE GENOMIC DNA]</scope>
    <source>
        <strain>KIM10+ / Biovar Mediaevalis</strain>
    </source>
</reference>
<reference key="3">
    <citation type="journal article" date="2004" name="DNA Res.">
        <title>Complete genome sequence of Yersinia pestis strain 91001, an isolate avirulent to humans.</title>
        <authorList>
            <person name="Song Y."/>
            <person name="Tong Z."/>
            <person name="Wang J."/>
            <person name="Wang L."/>
            <person name="Guo Z."/>
            <person name="Han Y."/>
            <person name="Zhang J."/>
            <person name="Pei D."/>
            <person name="Zhou D."/>
            <person name="Qin H."/>
            <person name="Pang X."/>
            <person name="Han Y."/>
            <person name="Zhai J."/>
            <person name="Li M."/>
            <person name="Cui B."/>
            <person name="Qi Z."/>
            <person name="Jin L."/>
            <person name="Dai R."/>
            <person name="Chen F."/>
            <person name="Li S."/>
            <person name="Ye C."/>
            <person name="Du Z."/>
            <person name="Lin W."/>
            <person name="Wang J."/>
            <person name="Yu J."/>
            <person name="Yang H."/>
            <person name="Wang J."/>
            <person name="Huang P."/>
            <person name="Yang R."/>
        </authorList>
    </citation>
    <scope>NUCLEOTIDE SEQUENCE [LARGE SCALE GENOMIC DNA]</scope>
    <source>
        <strain>91001 / Biovar Mediaevalis</strain>
    </source>
</reference>
<accession>Q8ZJI8</accession>
<accession>Q0WKI5</accession>
<keyword id="KW-0028">Amino-acid biosynthesis</keyword>
<keyword id="KW-0963">Cytoplasm</keyword>
<keyword id="KW-0238">DNA-binding</keyword>
<keyword id="KW-0486">Methionine biosynthesis</keyword>
<keyword id="KW-1185">Reference proteome</keyword>
<keyword id="KW-0678">Repressor</keyword>
<keyword id="KW-0804">Transcription</keyword>
<keyword id="KW-0805">Transcription regulation</keyword>
<organism>
    <name type="scientific">Yersinia pestis</name>
    <dbReference type="NCBI Taxonomy" id="632"/>
    <lineage>
        <taxon>Bacteria</taxon>
        <taxon>Pseudomonadati</taxon>
        <taxon>Pseudomonadota</taxon>
        <taxon>Gammaproteobacteria</taxon>
        <taxon>Enterobacterales</taxon>
        <taxon>Yersiniaceae</taxon>
        <taxon>Yersinia</taxon>
    </lineage>
</organism>
<name>METJ_YERPE</name>
<evidence type="ECO:0000255" key="1">
    <source>
        <dbReference type="HAMAP-Rule" id="MF_00744"/>
    </source>
</evidence>
<comment type="function">
    <text evidence="1">This regulatory protein, when combined with SAM (S-adenosylmethionine) represses the expression of the methionine regulon and of enzymes involved in SAM synthesis.</text>
</comment>
<comment type="subunit">
    <text evidence="1">Homodimer.</text>
</comment>
<comment type="subcellular location">
    <subcellularLocation>
        <location evidence="1">Cytoplasm</location>
    </subcellularLocation>
</comment>
<comment type="domain">
    <text>Does not bind DNA by a helix-turn-helix motif.</text>
</comment>
<comment type="similarity">
    <text evidence="1">Belongs to the MetJ family.</text>
</comment>
<protein>
    <recommendedName>
        <fullName evidence="1">Met repressor</fullName>
    </recommendedName>
    <alternativeName>
        <fullName evidence="1">Met regulon regulatory protein MetJ</fullName>
    </alternativeName>
</protein>
<proteinExistence type="inferred from homology"/>
<gene>
    <name evidence="1" type="primary">metJ</name>
    <name type="ordered locus">YPO0114</name>
    <name type="ordered locus">y0301</name>
    <name type="ordered locus">YP_0116</name>
</gene>